<name>MAMK_PARM1</name>
<comment type="function">
    <text evidence="2 3 5 6 8 9 11 12 15 19">Protein with ATPase activity which forms dynamic cytoplasmic filaments (probably with paralog MamK-like) that organize magnetosomes into long chains running parallel to the long axis of the cell (Probable) (PubMed:21883528, PubMed:23204522, PubMed:24957623, PubMed:28790202). Turnover of MamK filaments is probably promoted by MamK-like, which provides a monomer pool (PubMed:24957623). Forms twisted filaments in the presence of ATP or GTP (PubMed:20161777, PubMed:23204522, PubMed:27391173). Serves to close gaps between magnetosomes in the chain (PubMed:26884433). Interaction with MCP10 is involved in controlling the response to magnetic fields, possibly by controlling flagellar rotation (PubMed:20471399). Expression in E.coli yields a filament in the cell's longitudinal axis; the protein nucleates at several sites and one extremity of the filament is located at the cell pole (PubMed:17085581, PubMed:20161777).</text>
</comment>
<comment type="catalytic activity">
    <reaction evidence="8 9">
        <text>ATP + H2O = ADP + phosphate + H(+)</text>
        <dbReference type="Rhea" id="RHEA:13065"/>
        <dbReference type="ChEBI" id="CHEBI:15377"/>
        <dbReference type="ChEBI" id="CHEBI:15378"/>
        <dbReference type="ChEBI" id="CHEBI:30616"/>
        <dbReference type="ChEBI" id="CHEBI:43474"/>
        <dbReference type="ChEBI" id="CHEBI:456216"/>
    </reaction>
</comment>
<comment type="activity regulation">
    <text evidence="6">Filament turnover is promoted by MamJ and/or LimJ which have overlapping function; at least one other protein is required for turnover. MamK filament dynamics are probably required for the assembly or maintenance of the magnetosome chain.</text>
</comment>
<comment type="biophysicochemical properties">
    <kinetics>
        <KM evidence="9">143 uM for ATP</KM>
    </kinetics>
</comment>
<comment type="subunit">
    <text evidence="5 8 9 12 14">Forms cytoplasmic filaments (PubMed:20471399, PubMed:23204522, PubMed:27391173, PubMed:27821762). Filaments are parallel (polar) and double-helical (PubMed:23204522, PubMed:27391173, PubMed:27821762). MamK subunits from each of the two strands are juxtaposed, each monomer binds ADP (PubMed:27391173, PubMed:27821762). At cell poles and septa interacts with methyl-accepting chemotaxis protein Amb0944 (MCP10) (PubMed:20471399). Forms filaments with MamK-like protein (PubMed:24957623).</text>
</comment>
<comment type="subcellular location">
    <subcellularLocation>
        <location evidence="1 21">Cytoplasm</location>
    </subcellularLocation>
    <subcellularLocation>
        <location evidence="1 2 5 6 9 13">Cytoplasm</location>
        <location evidence="1 2 5 6 9 13">Cytoskeleton</location>
    </subcellularLocation>
    <subcellularLocation>
        <location evidence="18">Magnetosome membrane</location>
        <topology evidence="17">Peripheral membrane protein</topology>
    </subcellularLocation>
    <text evidence="1 2 5 6 9 13">Tagged protein forms straight lines extending along most of the cell associated with its inner curvature, in the correct position to be filaments that are seen associated with magnetosomes (PubMed:16373532, PubMed:17085581, PubMed:20471399, PubMed:21883528, PubMed:27481925). Colocalizes in filaments with paralog MamK-like (PubMed:24957623).</text>
</comment>
<comment type="induction">
    <text evidence="3 9 10 20">Constitutively expressed, levels remain the same over 144 hours of growth (at protein level) (PubMed:25048532). Expressed during exponential phase in static growth conditions (PubMed:20161777). Expressed during late exponential phase in the presence and absence of the mamK-like gene (PubMed:24957623). Part of the probable 18 gene mamAB operon (Probable).</text>
</comment>
<comment type="domain">
    <text evidence="14 23">Domains close around the active site upon filament formation, which probably enhances nucleotide hydrolysis (PubMed:27821762). Nucleotide-binding also probably induces domain movement (Probable).</text>
</comment>
<comment type="disruption phenotype">
    <text evidence="1 3 4 9 11 15">Magnetosomes are dispersed in groups of 2-3 throughout the cytoplasm, no evidence of magnetosome-associated filaments. Cells form magnetite and turn in magnetic fields (PubMed:16373532, PubMed:26884433). Unanchored magnetosomes move randomly in the cytoplasm. Magnetosomes are unevenly segregated to daughter cells (PubMed:28790202). About 45% reduction in magnetosome alignment; a double mamK-mamK-like deletion has a 65% reduction in magnetosome alignment. MamK-like protein forms many fewer filaments (PubMed:24957623). Another paper shows deletion of mamK to yield approximately wild-type magnetosomes (PubMed:20161777). Deletion of genes mamH to mamV (amb0961 to amb0978) gives cells with no magnetosomes and no magnetic response (PubMed:20212111).</text>
</comment>
<comment type="miscellaneous">
    <text evidence="17">This bacteria makes up to 20 cubo-octahedral magnetosomes of about 45 nm in diameter which contain membrane-bound crystals of magnetite (Fe(3)O(4)).</text>
</comment>
<comment type="miscellaneous">
    <text evidence="7">Expression of just the minimal mamAB gene cluster (amb0961 to amb0978), including this gene, is sufficient to form a minimal magnetosome chain with small magnetite particles.</text>
</comment>
<comment type="miscellaneous">
    <text evidence="17">In the related bacteria M.gryphiswaldense strain MSR-1 the magnetosome position moves from cell pole to mid cell during cytokinesis.</text>
</comment>
<comment type="similarity">
    <text evidence="19">Belongs to the FtsA/MreB family. MamK subfamily.</text>
</comment>
<accession>Q2W8Q6</accession>
<gene>
    <name type="primary">mamK</name>
    <name type="ordered locus">amb0965</name>
</gene>
<dbReference type="EC" id="3.6.1.-" evidence="8 9"/>
<dbReference type="EMBL" id="AP007255">
    <property type="protein sequence ID" value="BAE49769.1"/>
    <property type="molecule type" value="Genomic_DNA"/>
</dbReference>
<dbReference type="RefSeq" id="WP_011383398.1">
    <property type="nucleotide sequence ID" value="NC_007626.1"/>
</dbReference>
<dbReference type="PDB" id="5JYG">
    <property type="method" value="EM"/>
    <property type="resolution" value="6.50 A"/>
    <property type="chains" value="A/B/C/D/E/F/G/H/I/J/K/L/M/N=1-347"/>
</dbReference>
<dbReference type="PDB" id="5LJV">
    <property type="method" value="EM"/>
    <property type="resolution" value="3.65 A"/>
    <property type="chains" value="A/B/C/D/E/F=1-347"/>
</dbReference>
<dbReference type="PDB" id="5LJW">
    <property type="method" value="X-ray"/>
    <property type="resolution" value="1.80 A"/>
    <property type="chains" value="A/B=1-347"/>
</dbReference>
<dbReference type="PDBsum" id="5JYG"/>
<dbReference type="PDBsum" id="5LJV"/>
<dbReference type="PDBsum" id="5LJW"/>
<dbReference type="EMDB" id="EMD-4062"/>
<dbReference type="EMDB" id="EMD-8180"/>
<dbReference type="SMR" id="Q2W8Q6"/>
<dbReference type="STRING" id="342108.amb0965"/>
<dbReference type="KEGG" id="mag:amb0965"/>
<dbReference type="HOGENOM" id="CLU_052037_3_0_5"/>
<dbReference type="OrthoDB" id="245310at2"/>
<dbReference type="Proteomes" id="UP000007058">
    <property type="component" value="Chromosome"/>
</dbReference>
<dbReference type="GO" id="GO:0005737">
    <property type="term" value="C:cytoplasm"/>
    <property type="evidence" value="ECO:0007669"/>
    <property type="project" value="UniProtKB-SubCell"/>
</dbReference>
<dbReference type="GO" id="GO:0005856">
    <property type="term" value="C:cytoskeleton"/>
    <property type="evidence" value="ECO:0000314"/>
    <property type="project" value="UniProtKB"/>
</dbReference>
<dbReference type="GO" id="GO:0110146">
    <property type="term" value="C:magnetosome membrane"/>
    <property type="evidence" value="ECO:0007669"/>
    <property type="project" value="UniProtKB-SubCell"/>
</dbReference>
<dbReference type="GO" id="GO:0005524">
    <property type="term" value="F:ATP binding"/>
    <property type="evidence" value="ECO:0007669"/>
    <property type="project" value="UniProtKB-KW"/>
</dbReference>
<dbReference type="GO" id="GO:0016887">
    <property type="term" value="F:ATP hydrolysis activity"/>
    <property type="evidence" value="ECO:0007669"/>
    <property type="project" value="RHEA"/>
</dbReference>
<dbReference type="GO" id="GO:0005525">
    <property type="term" value="F:GTP binding"/>
    <property type="evidence" value="ECO:0007669"/>
    <property type="project" value="UniProtKB-KW"/>
</dbReference>
<dbReference type="GO" id="GO:0046872">
    <property type="term" value="F:metal ion binding"/>
    <property type="evidence" value="ECO:0007669"/>
    <property type="project" value="UniProtKB-KW"/>
</dbReference>
<dbReference type="GO" id="GO:0140923">
    <property type="term" value="P:magnetosome assembly"/>
    <property type="evidence" value="ECO:0000315"/>
    <property type="project" value="UniProtKB"/>
</dbReference>
<dbReference type="CDD" id="cd24009">
    <property type="entry name" value="ASKHA_NBD_MamK"/>
    <property type="match status" value="1"/>
</dbReference>
<dbReference type="Gene3D" id="3.30.420.40">
    <property type="match status" value="3"/>
</dbReference>
<dbReference type="InterPro" id="IPR004000">
    <property type="entry name" value="Actin"/>
</dbReference>
<dbReference type="InterPro" id="IPR043129">
    <property type="entry name" value="ATPase_NBD"/>
</dbReference>
<dbReference type="InterPro" id="IPR056546">
    <property type="entry name" value="MreB_MamK-like"/>
</dbReference>
<dbReference type="NCBIfam" id="NF040964">
    <property type="entry name" value="MamK"/>
    <property type="match status" value="1"/>
</dbReference>
<dbReference type="PANTHER" id="PTHR42749">
    <property type="entry name" value="CELL SHAPE-DETERMINING PROTEIN MREB"/>
    <property type="match status" value="1"/>
</dbReference>
<dbReference type="PANTHER" id="PTHR42749:SF1">
    <property type="entry name" value="CELL SHAPE-DETERMINING PROTEIN MREB"/>
    <property type="match status" value="1"/>
</dbReference>
<dbReference type="Pfam" id="PF06723">
    <property type="entry name" value="MreB_Mbl"/>
    <property type="match status" value="1"/>
</dbReference>
<dbReference type="SMART" id="SM00268">
    <property type="entry name" value="ACTIN"/>
    <property type="match status" value="1"/>
</dbReference>
<dbReference type="SUPFAM" id="SSF53067">
    <property type="entry name" value="Actin-like ATPase domain"/>
    <property type="match status" value="2"/>
</dbReference>
<reference key="1">
    <citation type="journal article" date="2005" name="DNA Res.">
        <title>Complete genome sequence of the facultative anaerobic magnetotactic bacterium Magnetospirillum sp. strain AMB-1.</title>
        <authorList>
            <person name="Matsunaga T."/>
            <person name="Okamura Y."/>
            <person name="Fukuda Y."/>
            <person name="Wahyudi A.T."/>
            <person name="Murase Y."/>
            <person name="Takeyama H."/>
        </authorList>
    </citation>
    <scope>NUCLEOTIDE SEQUENCE [LARGE SCALE GENOMIC DNA]</scope>
    <scope>SUBCELLULAR LOCATION</scope>
    <source>
        <strain>ATCC 700264 / AMB-1</strain>
    </source>
</reference>
<reference key="2">
    <citation type="journal article" date="2006" name="Proc. Natl. Acad. Sci. U.S.A.">
        <title>Biogenesis of actin-like bacterial cytoskeletal filaments destined for positioning prokaryotic magnetic organelles.</title>
        <authorList>
            <person name="Pradel N."/>
            <person name="Santini C.L."/>
            <person name="Bernadac A."/>
            <person name="Fukumori Y."/>
            <person name="Wu L.F."/>
        </authorList>
    </citation>
    <scope>FUNCTION</scope>
    <scope>EXPRESSION IN E.COLI</scope>
    <scope>SUBCELLULAR LOCATION</scope>
    <scope>MUTAGENESIS OF 1-MET--VAL-25</scope>
    <source>
        <strain>ATCC 700264 / AMB-1</strain>
    </source>
</reference>
<reference key="3">
    <citation type="journal article" date="2006" name="Science">
        <title>Magnetosomes are cell membrane invaginations organized by the actin-like protein MamK.</title>
        <authorList>
            <person name="Komeili A."/>
            <person name="Li Z."/>
            <person name="Newman D.K."/>
            <person name="Jensen G.J."/>
        </authorList>
    </citation>
    <scope>FUNCTION</scope>
    <scope>SUBCELLULAR LOCATION</scope>
    <scope>DISRUPTION PHENOTYPE</scope>
    <source>
        <strain>ATCC 700264 / AMB-1</strain>
    </source>
</reference>
<reference key="4">
    <citation type="journal article" date="2010" name="J. Mol. Biol.">
        <title>An MCP-like protein interacts with the MamK cytoskeleton and is involved in magnetotaxis in Magnetospirillum magneticum AMB-1.</title>
        <authorList>
            <person name="Philippe N."/>
            <person name="Wu L.F."/>
        </authorList>
    </citation>
    <scope>FUNCTION</scope>
    <scope>INTERACTION WITH MCP10</scope>
    <scope>SUBCELLULAR LOCATION</scope>
    <scope>MUTAGENESIS OF 1-MET--VAL-25</scope>
    <source>
        <strain>ATCC 700264 / AMB-1</strain>
    </source>
</reference>
<reference key="5">
    <citation type="journal article" date="2010" name="PLoS ONE">
        <title>A second actin-like MamK protein in Magnetospirillum magneticum AMB-1 encoded outside the genomic magnetosome island.</title>
        <authorList>
            <person name="Rioux J.B."/>
            <person name="Philippe N."/>
            <person name="Pereira S."/>
            <person name="Pignol D."/>
            <person name="Wu L.F."/>
            <person name="Ginet N."/>
        </authorList>
    </citation>
    <scope>FUNCTION</scope>
    <scope>INDUCTION</scope>
    <scope>DISRUPTION PHENOTYPE</scope>
    <source>
        <strain>ATCC 700264 / AMB-1</strain>
    </source>
</reference>
<reference key="6">
    <citation type="journal article" date="2010" name="Proc. Natl. Acad. Sci. U.S.A.">
        <title>Comprehensive genetic dissection of the magnetosome gene island reveals the step-wise assembly of a prokaryotic organelle.</title>
        <authorList>
            <person name="Murat D."/>
            <person name="Quinlan A."/>
            <person name="Vali H."/>
            <person name="Komeili A."/>
        </authorList>
    </citation>
    <scope>PROBABLE OPERON</scope>
    <scope>DISRUPTION PHENOTYPE</scope>
    <source>
        <strain>ATCC 700264 / AMB-1</strain>
    </source>
</reference>
<reference key="7">
    <citation type="journal article" date="2011" name="Mol. Microbiol.">
        <title>MamK, a bacterial actin, forms dynamic filaments in vivo that are regulated by the acidic proteins MamJ and LimJ.</title>
        <authorList>
            <person name="Draper O."/>
            <person name="Byrne M.E."/>
            <person name="Li Z."/>
            <person name="Keyhani S."/>
            <person name="Barrozo J.C."/>
            <person name="Jensen G."/>
            <person name="Komeili A."/>
        </authorList>
    </citation>
    <scope>FUNCTION</scope>
    <scope>ACTIVITY REGULATION</scope>
    <scope>SUBCELLULAR LOCATION</scope>
    <scope>MUTAGENESIS OF GLU-143 AND ASP-161</scope>
    <source>
        <strain>ATCC 700264 / AMB-1</strain>
    </source>
</reference>
<reference key="8">
    <citation type="journal article" date="2012" name="Mol. Microbiol.">
        <title>The magnetosome membrane protein, MmsF, is a major regulator of magnetite biomineralization in Magnetospirillum magneticum AMB-1.</title>
        <authorList>
            <person name="Murat D."/>
            <person name="Falahati V."/>
            <person name="Bertinetti L."/>
            <person name="Csencsits R."/>
            <person name="Koernig A."/>
            <person name="Downing K."/>
            <person name="Faivre D."/>
            <person name="Komeili A."/>
        </authorList>
    </citation>
    <scope>MINIMAL MAGNETOSOME ISLAND</scope>
    <source>
        <strain>ATCC 700264 / AMB-1</strain>
    </source>
</reference>
<reference key="9">
    <citation type="journal article" date="2014" name="FEMS Microbiol. Lett.">
        <title>A magnetosome-associated cytochrome MamP is critical for magnetite crystal growth during the exponential growth phase.</title>
        <authorList>
            <person name="Taoka A."/>
            <person name="Eguchi Y."/>
            <person name="Mise S."/>
            <person name="Oestreicher Z."/>
            <person name="Uno F."/>
            <person name="Fukumori Y."/>
        </authorList>
    </citation>
    <scope>INDUCTION</scope>
    <source>
        <strain>ATCC 700264 / AMB-1</strain>
    </source>
</reference>
<reference key="10">
    <citation type="journal article" date="2014" name="J. Bacteriol.">
        <title>Interplay between two bacterial actin homologs, MamK and MamK-Like, is required for the alignment of magnetosome organelles in Magnetospirillum magneticum AMB-1.</title>
        <authorList>
            <person name="Abreu N."/>
            <person name="Mannoubi S."/>
            <person name="Ozyamak E."/>
            <person name="Pignol D."/>
            <person name="Ginet N."/>
            <person name="Komeili A."/>
        </authorList>
    </citation>
    <scope>FUNCTION</scope>
    <scope>ATPASE ACTIVITY</scope>
    <scope>FORMS FILAMENTS</scope>
    <scope>BIOPHYSICOCHEMICAL PROPERTIES</scope>
    <scope>INTERACTION WITH MAMK</scope>
    <scope>SUBUNIT</scope>
    <scope>SUBCELLULAR LOCATION</scope>
    <scope>INDUCTION</scope>
    <scope>DISRUPTION PHENOTYPE</scope>
    <scope>MUTAGENESIS OF GLU-143</scope>
    <source>
        <strain>ATCC 700264 / AMB-1</strain>
    </source>
</reference>
<reference key="11">
    <citation type="journal article" date="2016" name="J. Bacteriol.">
        <title>Comparative subcellular localization analysis of magnetosome proteins reveals a unique localization behavior of Mms6 protein onto magnetite crystals.</title>
        <authorList>
            <person name="Arakaki A."/>
            <person name="Kikuchi D."/>
            <person name="Tanaka M."/>
            <person name="Yamagishi A."/>
            <person name="Yoda T."/>
            <person name="Matsunaga T."/>
        </authorList>
    </citation>
    <scope>SUBCELLULAR LOCATION</scope>
    <source>
        <strain>ATCC 700264 / AMB-1</strain>
    </source>
</reference>
<reference key="12">
    <citation type="journal article" date="2013" name="J. Biol. Chem.">
        <title>The bacterial actin MamK: in vitro assembly behavior and filament architecture.</title>
        <authorList>
            <person name="Ozyamak E."/>
            <person name="Kollman J."/>
            <person name="Agard D.A."/>
            <person name="Komeili A."/>
        </authorList>
    </citation>
    <scope>STRUCTURE BY ELECTRON MICROSCOPY (12.0 ANGSTROMS)</scope>
    <scope>FUNCTION</scope>
    <scope>ATPASE ACTIVITY</scope>
    <scope>FORMS FILAMENTS</scope>
    <scope>SUBUNIT</scope>
    <scope>MUTAGENESIS OF GLU-143</scope>
    <source>
        <strain>ATCC 700264 / AMB-1</strain>
    </source>
</reference>
<reference key="13">
    <citation type="journal article" date="2016" name="MBio">
        <title>Dynamic Remodeling of the Magnetosome Membrane Is Triggered by the Initiation of Biomineralization.</title>
        <authorList>
            <person name="Cornejo E."/>
            <person name="Subramanian P."/>
            <person name="Li Z."/>
            <person name="Jensen G.J."/>
            <person name="Komeili A."/>
        </authorList>
    </citation>
    <scope>FUNCTION</scope>
    <scope>DISRUPTION PHENOTYPE</scope>
    <source>
        <strain>ATCC 700264 / AMB-1</strain>
    </source>
</reference>
<reference key="14">
    <citation type="journal article" date="2017" name="MBio">
        <title>Tethered Magnets Are the Key to Magnetotaxis: Direct Observations of Magnetospirillum magneticum AMB-1 Show that MamK Distributes Magnetosome Organelles Equally to Daughter Cells.</title>
        <authorList>
            <person name="Taoka A."/>
            <person name="Kiyokawa A."/>
            <person name="Uesugi C."/>
            <person name="Kikuchi Y."/>
            <person name="Oestreicher Z."/>
            <person name="Morii K."/>
            <person name="Eguchi Y."/>
            <person name="Fukumori Y."/>
        </authorList>
    </citation>
    <scope>FUNCTION</scope>
    <scope>DISRUPTION PHENOTYPE</scope>
    <scope>MUTAGENESIS OF GLU-143 AND ASP-161</scope>
    <source>
        <strain>ATCC 700264 / AMB-1</strain>
    </source>
</reference>
<reference evidence="25 26" key="15">
    <citation type="journal article" date="2016" name="Proc. Natl. Acad. Sci. U.S.A.">
        <title>X-ray and cryo-EM structures of monomeric and filamentous actin-like protein MamK reveal changes associated with polymerization.</title>
        <authorList>
            <person name="Lowe J."/>
            <person name="He S."/>
            <person name="Scheres S.H."/>
            <person name="Savva C.G."/>
        </authorList>
    </citation>
    <scope>X-RAY CRYSTALLOGRAPHY (1.80 ANGSTROMS) OF 1-347 IN COMPLEX WITH ADP AND ATP ANALOG</scope>
    <scope>SUBUNIT</scope>
    <scope>DOMAIN</scope>
    <scope>MUTAGENESIS OF ALA-278</scope>
    <source>
        <strain>ATCC 700264 / AMB-1</strain>
    </source>
</reference>
<reference evidence="24" key="16">
    <citation type="journal article" date="2017" name="Protein Sci.">
        <title>Structure of the magnetosome-associated actin-like MamK filament at subnanometer resolution.</title>
        <authorList>
            <person name="Bergeron J.R."/>
            <person name="Hutto R."/>
            <person name="Ozyamak E."/>
            <person name="Hom N."/>
            <person name="Hansen J."/>
            <person name="Draper O."/>
            <person name="Byrne M.E."/>
            <person name="Keyhani S."/>
            <person name="Komeili A."/>
            <person name="Kollman J.M."/>
        </authorList>
    </citation>
    <scope>STRUCTURE BY ELECTRON MICROSCOPY (6.50 ANGSTROMS) IN COMPLEX WITH ADP</scope>
    <scope>FUNCTION</scope>
    <scope>FORMS FILAMENTS</scope>
    <scope>SUBUNIT</scope>
    <scope>MUTAGENESIS OF 240-LYS--VAL-242</scope>
</reference>
<proteinExistence type="evidence at protein level"/>
<feature type="chain" id="PRO_0000447774" description="Actin-like protein MamK">
    <location>
        <begin position="1"/>
        <end position="347"/>
    </location>
</feature>
<feature type="binding site" evidence="14 26">
    <location>
        <position position="9"/>
    </location>
    <ligand>
        <name>ATP</name>
        <dbReference type="ChEBI" id="CHEBI:30616"/>
    </ligand>
</feature>
<feature type="binding site" evidence="12 14 24 26">
    <location>
        <begin position="20"/>
        <end position="21"/>
    </location>
    <ligand>
        <name>ATP</name>
        <dbReference type="ChEBI" id="CHEBI:30616"/>
    </ligand>
</feature>
<feature type="binding site" evidence="12 14 24 26">
    <location>
        <position position="76"/>
    </location>
    <ligand>
        <name>ATP</name>
        <dbReference type="ChEBI" id="CHEBI:30616"/>
    </ligand>
</feature>
<feature type="binding site" evidence="14 25">
    <location>
        <position position="143"/>
    </location>
    <ligand>
        <name>Mg(2+)</name>
        <dbReference type="ChEBI" id="CHEBI:18420"/>
    </ligand>
</feature>
<feature type="binding site" evidence="12 14 22 24 26">
    <location>
        <begin position="164"/>
        <end position="166"/>
    </location>
    <ligand>
        <name>ATP</name>
        <dbReference type="ChEBI" id="CHEBI:30616"/>
    </ligand>
</feature>
<feature type="binding site" evidence="12 14 24 26">
    <location>
        <begin position="218"/>
        <end position="222"/>
    </location>
    <ligand>
        <name>ATP</name>
        <dbReference type="ChEBI" id="CHEBI:30616"/>
    </ligand>
</feature>
<feature type="binding site" evidence="12 14 24 26">
    <location>
        <position position="289"/>
    </location>
    <ligand>
        <name>ATP</name>
        <dbReference type="ChEBI" id="CHEBI:30616"/>
    </ligand>
</feature>
<feature type="mutagenesis site" description="Protein localizes to cell poles in E.coli, no longer forms filaments. No longer interacts with MCP10 in vivo." evidence="2 5">
    <location>
        <begin position="1"/>
        <end position="25"/>
    </location>
</feature>
<feature type="mutagenesis site" description="Wild-type subcellular location, MamK filaments no longer dynamic. Protein polymerizes rapidly in vitro, has lost ATPase activity, filaments no longer disassemble. Only partially restores magnetosome distribution." evidence="6 8 9 15">
    <original>E</original>
    <variation>A</variation>
    <location>
        <position position="143"/>
    </location>
</feature>
<feature type="mutagenesis site" description="Wild-type subcellular location, MamK filaments no longer dynamic. Only partially restores magnetosome distribution." evidence="6 15">
    <original>D</original>
    <variation>A</variation>
    <location>
        <position position="161"/>
    </location>
</feature>
<feature type="mutagenesis site" description="Filament nucleation is very slow, will assemble in vitro when seeded with wild-type protein. Does not form filaments in vivo." evidence="12">
    <original>KPV</original>
    <variation>APE</variation>
    <location>
        <begin position="240"/>
        <end position="242"/>
    </location>
</feature>
<feature type="mutagenesis site" description="No longer polymerizes, used for X-ray crystallography." evidence="14">
    <original>A</original>
    <variation>D</variation>
    <location>
        <position position="278"/>
    </location>
</feature>
<feature type="helix" evidence="27">
    <location>
        <begin position="5"/>
        <end position="9"/>
    </location>
</feature>
<feature type="strand" evidence="27">
    <location>
        <begin position="10"/>
        <end position="18"/>
    </location>
</feature>
<feature type="strand" evidence="27">
    <location>
        <begin position="20"/>
        <end position="27"/>
    </location>
</feature>
<feature type="strand" evidence="27">
    <location>
        <begin position="32"/>
        <end position="37"/>
    </location>
</feature>
<feature type="strand" evidence="27">
    <location>
        <begin position="39"/>
        <end position="44"/>
    </location>
</feature>
<feature type="helix" evidence="27">
    <location>
        <begin position="45"/>
        <end position="51"/>
    </location>
</feature>
<feature type="strand" evidence="27">
    <location>
        <begin position="52"/>
        <end position="54"/>
    </location>
</feature>
<feature type="strand" evidence="27">
    <location>
        <begin position="56"/>
        <end position="58"/>
    </location>
</feature>
<feature type="helix" evidence="27">
    <location>
        <begin position="59"/>
        <end position="63"/>
    </location>
</feature>
<feature type="helix" evidence="27">
    <location>
        <begin position="65"/>
        <end position="67"/>
    </location>
</feature>
<feature type="strand" evidence="27">
    <location>
        <begin position="68"/>
        <end position="71"/>
    </location>
</feature>
<feature type="turn" evidence="27">
    <location>
        <begin position="76"/>
        <end position="78"/>
    </location>
</feature>
<feature type="helix" evidence="27">
    <location>
        <begin position="84"/>
        <end position="100"/>
    </location>
</feature>
<feature type="strand" evidence="27">
    <location>
        <begin position="108"/>
        <end position="115"/>
    </location>
</feature>
<feature type="helix" evidence="27">
    <location>
        <begin position="121"/>
        <end position="131"/>
    </location>
</feature>
<feature type="turn" evidence="27">
    <location>
        <begin position="132"/>
        <end position="134"/>
    </location>
</feature>
<feature type="strand" evidence="27">
    <location>
        <begin position="135"/>
        <end position="142"/>
    </location>
</feature>
<feature type="helix" evidence="27">
    <location>
        <begin position="143"/>
        <end position="150"/>
    </location>
</feature>
<feature type="strand" evidence="27">
    <location>
        <begin position="155"/>
        <end position="162"/>
    </location>
</feature>
<feature type="strand" evidence="27">
    <location>
        <begin position="167"/>
        <end position="172"/>
    </location>
</feature>
<feature type="strand" evidence="27">
    <location>
        <begin position="174"/>
        <end position="176"/>
    </location>
</feature>
<feature type="helix" evidence="27">
    <location>
        <begin position="179"/>
        <end position="181"/>
    </location>
</feature>
<feature type="strand" evidence="27">
    <location>
        <begin position="182"/>
        <end position="186"/>
    </location>
</feature>
<feature type="helix" evidence="27">
    <location>
        <begin position="189"/>
        <end position="203"/>
    </location>
</feature>
<feature type="helix" evidence="27">
    <location>
        <begin position="211"/>
        <end position="221"/>
    </location>
</feature>
<feature type="strand" evidence="27">
    <location>
        <begin position="232"/>
        <end position="237"/>
    </location>
</feature>
<feature type="strand" evidence="27">
    <location>
        <begin position="240"/>
        <end position="245"/>
    </location>
</feature>
<feature type="helix" evidence="27">
    <location>
        <begin position="247"/>
        <end position="255"/>
    </location>
</feature>
<feature type="helix" evidence="27">
    <location>
        <begin position="258"/>
        <end position="269"/>
    </location>
</feature>
<feature type="helix" evidence="27">
    <location>
        <begin position="274"/>
        <end position="276"/>
    </location>
</feature>
<feature type="helix" evidence="27">
    <location>
        <begin position="277"/>
        <end position="280"/>
    </location>
</feature>
<feature type="strand" evidence="27">
    <location>
        <begin position="284"/>
        <end position="288"/>
    </location>
</feature>
<feature type="helix" evidence="27">
    <location>
        <begin position="289"/>
        <end position="292"/>
    </location>
</feature>
<feature type="helix" evidence="27">
    <location>
        <begin position="296"/>
        <end position="303"/>
    </location>
</feature>
<feature type="turn" evidence="27">
    <location>
        <begin position="304"/>
        <end position="307"/>
    </location>
</feature>
<feature type="strand" evidence="27">
    <location>
        <begin position="312"/>
        <end position="314"/>
    </location>
</feature>
<feature type="turn" evidence="27">
    <location>
        <begin position="318"/>
        <end position="320"/>
    </location>
</feature>
<feature type="helix" evidence="27">
    <location>
        <begin position="321"/>
        <end position="332"/>
    </location>
</feature>
<protein>
    <recommendedName>
        <fullName evidence="16">Actin-like protein MamK</fullName>
        <ecNumber evidence="8 9">3.6.1.-</ecNumber>
    </recommendedName>
    <alternativeName>
        <fullName evidence="17">Magnetosome cytoskeleton protein MamK</fullName>
    </alternativeName>
</protein>
<evidence type="ECO:0000269" key="1">
    <source>
    </source>
</evidence>
<evidence type="ECO:0000269" key="2">
    <source>
    </source>
</evidence>
<evidence type="ECO:0000269" key="3">
    <source>
    </source>
</evidence>
<evidence type="ECO:0000269" key="4">
    <source>
    </source>
</evidence>
<evidence type="ECO:0000269" key="5">
    <source>
    </source>
</evidence>
<evidence type="ECO:0000269" key="6">
    <source>
    </source>
</evidence>
<evidence type="ECO:0000269" key="7">
    <source>
    </source>
</evidence>
<evidence type="ECO:0000269" key="8">
    <source>
    </source>
</evidence>
<evidence type="ECO:0000269" key="9">
    <source>
    </source>
</evidence>
<evidence type="ECO:0000269" key="10">
    <source>
    </source>
</evidence>
<evidence type="ECO:0000269" key="11">
    <source>
    </source>
</evidence>
<evidence type="ECO:0000269" key="12">
    <source>
    </source>
</evidence>
<evidence type="ECO:0000269" key="13">
    <source>
    </source>
</evidence>
<evidence type="ECO:0000269" key="14">
    <source>
    </source>
</evidence>
<evidence type="ECO:0000269" key="15">
    <source>
    </source>
</evidence>
<evidence type="ECO:0000303" key="16">
    <source>
    </source>
</evidence>
<evidence type="ECO:0000305" key="17"/>
<evidence type="ECO:0000305" key="18">
    <source>
    </source>
</evidence>
<evidence type="ECO:0000305" key="19">
    <source>
    </source>
</evidence>
<evidence type="ECO:0000305" key="20">
    <source>
    </source>
</evidence>
<evidence type="ECO:0000305" key="21">
    <source>
    </source>
</evidence>
<evidence type="ECO:0000305" key="22">
    <source>
    </source>
</evidence>
<evidence type="ECO:0000305" key="23">
    <source>
    </source>
</evidence>
<evidence type="ECO:0007744" key="24">
    <source>
        <dbReference type="PDB" id="5JYG"/>
    </source>
</evidence>
<evidence type="ECO:0007744" key="25">
    <source>
        <dbReference type="PDB" id="5LJV"/>
    </source>
</evidence>
<evidence type="ECO:0007744" key="26">
    <source>
        <dbReference type="PDB" id="5LJW"/>
    </source>
</evidence>
<evidence type="ECO:0007829" key="27">
    <source>
        <dbReference type="PDB" id="5LJW"/>
    </source>
</evidence>
<organism>
    <name type="scientific">Paramagnetospirillum magneticum (strain ATCC 700264 / AMB-1)</name>
    <name type="common">Magnetospirillum magneticum</name>
    <dbReference type="NCBI Taxonomy" id="342108"/>
    <lineage>
        <taxon>Bacteria</taxon>
        <taxon>Pseudomonadati</taxon>
        <taxon>Pseudomonadota</taxon>
        <taxon>Alphaproteobacteria</taxon>
        <taxon>Rhodospirillales</taxon>
        <taxon>Magnetospirillaceae</taxon>
        <taxon>Paramagnetospirillum</taxon>
    </lineage>
</organism>
<keyword id="KW-0002">3D-structure</keyword>
<keyword id="KW-0067">ATP-binding</keyword>
<keyword id="KW-0091">Biomineralization</keyword>
<keyword id="KW-0963">Cytoplasm</keyword>
<keyword id="KW-0206">Cytoskeleton</keyword>
<keyword id="KW-0342">GTP-binding</keyword>
<keyword id="KW-0378">Hydrolase</keyword>
<keyword id="KW-0460">Magnesium</keyword>
<keyword id="KW-1281">Magnetosome</keyword>
<keyword id="KW-0472">Membrane</keyword>
<keyword id="KW-0479">Metal-binding</keyword>
<keyword id="KW-0547">Nucleotide-binding</keyword>
<sequence length="347" mass="37614">MSEGEGQAKNRLFLGIDLGTSHTAVMSSRGKKFLLKSVVGYPKDVIGLKLLGRPYVVGDEAFEMRSYLDIRYPLQDGVLSEISDRDIEVARHLLTHVVKSAEPGPNDEICAVIGVPARASAANKALLLKMAQEVVHTALVVSEPFMVGYGLDKLINTIIVDIGAGTTDICALKGTVPGPEDQVTLTKAGNYVDERLQNAILERHPELQMNVNVACAVKEQFSFVGTPTEVASFEFRAAGKPVRADVTEPVKIACEALMPDIIESIETLLRSFQPEYQATVLQNIVFAGGGSRIRGLAAYVKEKLRPFGDANVTCVKDPTFDGCRGALRLAEELPPQYWRQLGDVSGS</sequence>